<feature type="chain" id="PRO_0000308002" description="Large ribosomal subunit protein uL1">
    <location>
        <begin position="1"/>
        <end position="232"/>
    </location>
</feature>
<comment type="function">
    <text evidence="1">Binds directly to 23S rRNA. The L1 stalk is quite mobile in the ribosome, and is involved in E site tRNA release.</text>
</comment>
<comment type="function">
    <text evidence="1">Protein L1 is also a translational repressor protein, it controls the translation of the L11 operon by binding to its mRNA.</text>
</comment>
<comment type="subunit">
    <text evidence="1">Part of the 50S ribosomal subunit.</text>
</comment>
<comment type="similarity">
    <text evidence="1">Belongs to the universal ribosomal protein uL1 family.</text>
</comment>
<keyword id="KW-1185">Reference proteome</keyword>
<keyword id="KW-0678">Repressor</keyword>
<keyword id="KW-0687">Ribonucleoprotein</keyword>
<keyword id="KW-0689">Ribosomal protein</keyword>
<keyword id="KW-0694">RNA-binding</keyword>
<keyword id="KW-0699">rRNA-binding</keyword>
<keyword id="KW-0810">Translation regulation</keyword>
<keyword id="KW-0820">tRNA-binding</keyword>
<proteinExistence type="inferred from homology"/>
<sequence length="232" mass="24493">MAKKTKRALAIREKLEAGKVYTALEALQLLKEMPAAKFVESVDVAINLGVDPRKSDQVVRGAAVLPHGTGKTVRVAVFAQNDNADAAKAAGADIVGMEELADEIKAGRSDFDVVIAEPAAMRVVGQLGQILGPRGLMPNPKVGTVTADIKAAVENAKAGQVRFRADKSGIVHAMIGKIDFDAEKLLENLHALIAEINKLRPTTIKGVYMQKAYISTTMGPGIAVDVASLTNA</sequence>
<reference key="1">
    <citation type="journal article" date="2007" name="Nat. Biotechnol.">
        <title>Genome sequence and identification of candidate vaccine antigens from the animal pathogen Dichelobacter nodosus.</title>
        <authorList>
            <person name="Myers G.S.A."/>
            <person name="Parker D."/>
            <person name="Al-Hasani K."/>
            <person name="Kennan R.M."/>
            <person name="Seemann T."/>
            <person name="Ren Q."/>
            <person name="Badger J.H."/>
            <person name="Selengut J.D."/>
            <person name="Deboy R.T."/>
            <person name="Tettelin H."/>
            <person name="Boyce J.D."/>
            <person name="McCarl V.P."/>
            <person name="Han X."/>
            <person name="Nelson W.C."/>
            <person name="Madupu R."/>
            <person name="Mohamoud Y."/>
            <person name="Holley T."/>
            <person name="Fedorova N."/>
            <person name="Khouri H."/>
            <person name="Bottomley S.P."/>
            <person name="Whittington R.J."/>
            <person name="Adler B."/>
            <person name="Songer J.G."/>
            <person name="Rood J.I."/>
            <person name="Paulsen I.T."/>
        </authorList>
    </citation>
    <scope>NUCLEOTIDE SEQUENCE [LARGE SCALE GENOMIC DNA]</scope>
    <source>
        <strain>VCS1703A</strain>
    </source>
</reference>
<organism>
    <name type="scientific">Dichelobacter nodosus (strain VCS1703A)</name>
    <dbReference type="NCBI Taxonomy" id="246195"/>
    <lineage>
        <taxon>Bacteria</taxon>
        <taxon>Pseudomonadati</taxon>
        <taxon>Pseudomonadota</taxon>
        <taxon>Gammaproteobacteria</taxon>
        <taxon>Cardiobacteriales</taxon>
        <taxon>Cardiobacteriaceae</taxon>
        <taxon>Dichelobacter</taxon>
    </lineage>
</organism>
<protein>
    <recommendedName>
        <fullName evidence="1">Large ribosomal subunit protein uL1</fullName>
    </recommendedName>
    <alternativeName>
        <fullName evidence="2">50S ribosomal protein L1</fullName>
    </alternativeName>
</protein>
<name>RL1_DICNV</name>
<evidence type="ECO:0000255" key="1">
    <source>
        <dbReference type="HAMAP-Rule" id="MF_01318"/>
    </source>
</evidence>
<evidence type="ECO:0000305" key="2"/>
<accession>A5EX73</accession>
<gene>
    <name evidence="1" type="primary">rplA</name>
    <name type="ordered locus">DNO_1285</name>
</gene>
<dbReference type="EMBL" id="CP000513">
    <property type="protein sequence ID" value="ABQ13549.1"/>
    <property type="molecule type" value="Genomic_DNA"/>
</dbReference>
<dbReference type="RefSeq" id="WP_012031580.1">
    <property type="nucleotide sequence ID" value="NC_009446.1"/>
</dbReference>
<dbReference type="SMR" id="A5EX73"/>
<dbReference type="STRING" id="246195.DNO_1285"/>
<dbReference type="KEGG" id="dno:DNO_1285"/>
<dbReference type="eggNOG" id="COG0081">
    <property type="taxonomic scope" value="Bacteria"/>
</dbReference>
<dbReference type="HOGENOM" id="CLU_062853_0_0_6"/>
<dbReference type="OrthoDB" id="9803740at2"/>
<dbReference type="Proteomes" id="UP000000248">
    <property type="component" value="Chromosome"/>
</dbReference>
<dbReference type="GO" id="GO:0022625">
    <property type="term" value="C:cytosolic large ribosomal subunit"/>
    <property type="evidence" value="ECO:0007669"/>
    <property type="project" value="TreeGrafter"/>
</dbReference>
<dbReference type="GO" id="GO:0019843">
    <property type="term" value="F:rRNA binding"/>
    <property type="evidence" value="ECO:0007669"/>
    <property type="project" value="UniProtKB-UniRule"/>
</dbReference>
<dbReference type="GO" id="GO:0003735">
    <property type="term" value="F:structural constituent of ribosome"/>
    <property type="evidence" value="ECO:0007669"/>
    <property type="project" value="InterPro"/>
</dbReference>
<dbReference type="GO" id="GO:0000049">
    <property type="term" value="F:tRNA binding"/>
    <property type="evidence" value="ECO:0007669"/>
    <property type="project" value="UniProtKB-KW"/>
</dbReference>
<dbReference type="GO" id="GO:0006417">
    <property type="term" value="P:regulation of translation"/>
    <property type="evidence" value="ECO:0007669"/>
    <property type="project" value="UniProtKB-KW"/>
</dbReference>
<dbReference type="GO" id="GO:0006412">
    <property type="term" value="P:translation"/>
    <property type="evidence" value="ECO:0007669"/>
    <property type="project" value="UniProtKB-UniRule"/>
</dbReference>
<dbReference type="CDD" id="cd00403">
    <property type="entry name" value="Ribosomal_L1"/>
    <property type="match status" value="1"/>
</dbReference>
<dbReference type="FunFam" id="3.40.50.790:FF:000001">
    <property type="entry name" value="50S ribosomal protein L1"/>
    <property type="match status" value="1"/>
</dbReference>
<dbReference type="Gene3D" id="3.30.190.20">
    <property type="match status" value="1"/>
</dbReference>
<dbReference type="Gene3D" id="3.40.50.790">
    <property type="match status" value="1"/>
</dbReference>
<dbReference type="HAMAP" id="MF_01318_B">
    <property type="entry name" value="Ribosomal_uL1_B"/>
    <property type="match status" value="1"/>
</dbReference>
<dbReference type="InterPro" id="IPR005878">
    <property type="entry name" value="Ribosom_uL1_bac-type"/>
</dbReference>
<dbReference type="InterPro" id="IPR002143">
    <property type="entry name" value="Ribosomal_uL1"/>
</dbReference>
<dbReference type="InterPro" id="IPR023674">
    <property type="entry name" value="Ribosomal_uL1-like"/>
</dbReference>
<dbReference type="InterPro" id="IPR028364">
    <property type="entry name" value="Ribosomal_uL1/biogenesis"/>
</dbReference>
<dbReference type="InterPro" id="IPR016095">
    <property type="entry name" value="Ribosomal_uL1_3-a/b-sand"/>
</dbReference>
<dbReference type="InterPro" id="IPR023673">
    <property type="entry name" value="Ribosomal_uL1_CS"/>
</dbReference>
<dbReference type="NCBIfam" id="TIGR01169">
    <property type="entry name" value="rplA_bact"/>
    <property type="match status" value="1"/>
</dbReference>
<dbReference type="PANTHER" id="PTHR36427">
    <property type="entry name" value="54S RIBOSOMAL PROTEIN L1, MITOCHONDRIAL"/>
    <property type="match status" value="1"/>
</dbReference>
<dbReference type="PANTHER" id="PTHR36427:SF3">
    <property type="entry name" value="LARGE RIBOSOMAL SUBUNIT PROTEIN UL1M"/>
    <property type="match status" value="1"/>
</dbReference>
<dbReference type="Pfam" id="PF00687">
    <property type="entry name" value="Ribosomal_L1"/>
    <property type="match status" value="1"/>
</dbReference>
<dbReference type="PIRSF" id="PIRSF002155">
    <property type="entry name" value="Ribosomal_L1"/>
    <property type="match status" value="1"/>
</dbReference>
<dbReference type="SUPFAM" id="SSF56808">
    <property type="entry name" value="Ribosomal protein L1"/>
    <property type="match status" value="1"/>
</dbReference>
<dbReference type="PROSITE" id="PS01199">
    <property type="entry name" value="RIBOSOMAL_L1"/>
    <property type="match status" value="1"/>
</dbReference>